<feature type="chain" id="PRO_1000043046" description="Anthranilate phosphoribosyltransferase">
    <location>
        <begin position="1"/>
        <end position="344"/>
    </location>
</feature>
<feature type="binding site" evidence="1">
    <location>
        <position position="86"/>
    </location>
    <ligand>
        <name>5-phospho-alpha-D-ribose 1-diphosphate</name>
        <dbReference type="ChEBI" id="CHEBI:58017"/>
    </ligand>
</feature>
<feature type="binding site" evidence="1">
    <location>
        <position position="86"/>
    </location>
    <ligand>
        <name>anthranilate</name>
        <dbReference type="ChEBI" id="CHEBI:16567"/>
        <label>1</label>
    </ligand>
</feature>
<feature type="binding site" evidence="1">
    <location>
        <begin position="89"/>
        <end position="90"/>
    </location>
    <ligand>
        <name>5-phospho-alpha-D-ribose 1-diphosphate</name>
        <dbReference type="ChEBI" id="CHEBI:58017"/>
    </ligand>
</feature>
<feature type="binding site" evidence="1">
    <location>
        <position position="94"/>
    </location>
    <ligand>
        <name>5-phospho-alpha-D-ribose 1-diphosphate</name>
        <dbReference type="ChEBI" id="CHEBI:58017"/>
    </ligand>
</feature>
<feature type="binding site" evidence="1">
    <location>
        <begin position="96"/>
        <end position="99"/>
    </location>
    <ligand>
        <name>5-phospho-alpha-D-ribose 1-diphosphate</name>
        <dbReference type="ChEBI" id="CHEBI:58017"/>
    </ligand>
</feature>
<feature type="binding site" evidence="1">
    <location>
        <position position="98"/>
    </location>
    <ligand>
        <name>Mg(2+)</name>
        <dbReference type="ChEBI" id="CHEBI:18420"/>
        <label>1</label>
    </ligand>
</feature>
<feature type="binding site" evidence="1">
    <location>
        <begin position="114"/>
        <end position="122"/>
    </location>
    <ligand>
        <name>5-phospho-alpha-D-ribose 1-diphosphate</name>
        <dbReference type="ChEBI" id="CHEBI:58017"/>
    </ligand>
</feature>
<feature type="binding site" evidence="1">
    <location>
        <position position="117"/>
    </location>
    <ligand>
        <name>anthranilate</name>
        <dbReference type="ChEBI" id="CHEBI:16567"/>
        <label>1</label>
    </ligand>
</feature>
<feature type="binding site" evidence="1">
    <location>
        <position position="126"/>
    </location>
    <ligand>
        <name>5-phospho-alpha-D-ribose 1-diphosphate</name>
        <dbReference type="ChEBI" id="CHEBI:58017"/>
    </ligand>
</feature>
<feature type="binding site" evidence="1">
    <location>
        <position position="172"/>
    </location>
    <ligand>
        <name>anthranilate</name>
        <dbReference type="ChEBI" id="CHEBI:16567"/>
        <label>2</label>
    </ligand>
</feature>
<feature type="binding site" evidence="1">
    <location>
        <position position="231"/>
    </location>
    <ligand>
        <name>Mg(2+)</name>
        <dbReference type="ChEBI" id="CHEBI:18420"/>
        <label>2</label>
    </ligand>
</feature>
<feature type="binding site" evidence="1">
    <location>
        <position position="232"/>
    </location>
    <ligand>
        <name>Mg(2+)</name>
        <dbReference type="ChEBI" id="CHEBI:18420"/>
        <label>1</label>
    </ligand>
</feature>
<feature type="binding site" evidence="1">
    <location>
        <position position="232"/>
    </location>
    <ligand>
        <name>Mg(2+)</name>
        <dbReference type="ChEBI" id="CHEBI:18420"/>
        <label>2</label>
    </ligand>
</feature>
<dbReference type="EC" id="2.4.2.18" evidence="1"/>
<dbReference type="EMBL" id="CP000551">
    <property type="protein sequence ID" value="ABM70192.1"/>
    <property type="molecule type" value="Genomic_DNA"/>
</dbReference>
<dbReference type="RefSeq" id="WP_011818349.1">
    <property type="nucleotide sequence ID" value="NC_008816.1"/>
</dbReference>
<dbReference type="SMR" id="A2BQY1"/>
<dbReference type="STRING" id="146891.A9601_09081"/>
<dbReference type="KEGG" id="pmb:A9601_09081"/>
<dbReference type="eggNOG" id="COG0547">
    <property type="taxonomic scope" value="Bacteria"/>
</dbReference>
<dbReference type="HOGENOM" id="CLU_034315_2_1_3"/>
<dbReference type="OrthoDB" id="9806430at2"/>
<dbReference type="UniPathway" id="UPA00035">
    <property type="reaction ID" value="UER00041"/>
</dbReference>
<dbReference type="Proteomes" id="UP000002590">
    <property type="component" value="Chromosome"/>
</dbReference>
<dbReference type="GO" id="GO:0005829">
    <property type="term" value="C:cytosol"/>
    <property type="evidence" value="ECO:0007669"/>
    <property type="project" value="TreeGrafter"/>
</dbReference>
<dbReference type="GO" id="GO:0004048">
    <property type="term" value="F:anthranilate phosphoribosyltransferase activity"/>
    <property type="evidence" value="ECO:0007669"/>
    <property type="project" value="UniProtKB-UniRule"/>
</dbReference>
<dbReference type="GO" id="GO:0000287">
    <property type="term" value="F:magnesium ion binding"/>
    <property type="evidence" value="ECO:0007669"/>
    <property type="project" value="UniProtKB-UniRule"/>
</dbReference>
<dbReference type="GO" id="GO:0000162">
    <property type="term" value="P:L-tryptophan biosynthetic process"/>
    <property type="evidence" value="ECO:0007669"/>
    <property type="project" value="UniProtKB-UniRule"/>
</dbReference>
<dbReference type="FunFam" id="3.40.1030.10:FF:000002">
    <property type="entry name" value="Anthranilate phosphoribosyltransferase"/>
    <property type="match status" value="1"/>
</dbReference>
<dbReference type="Gene3D" id="3.40.1030.10">
    <property type="entry name" value="Nucleoside phosphorylase/phosphoribosyltransferase catalytic domain"/>
    <property type="match status" value="1"/>
</dbReference>
<dbReference type="Gene3D" id="1.20.970.10">
    <property type="entry name" value="Transferase, Pyrimidine Nucleoside Phosphorylase, Chain C"/>
    <property type="match status" value="1"/>
</dbReference>
<dbReference type="HAMAP" id="MF_00211">
    <property type="entry name" value="TrpD"/>
    <property type="match status" value="1"/>
</dbReference>
<dbReference type="InterPro" id="IPR005940">
    <property type="entry name" value="Anthranilate_Pribosyl_Tfrase"/>
</dbReference>
<dbReference type="InterPro" id="IPR000312">
    <property type="entry name" value="Glycosyl_Trfase_fam3"/>
</dbReference>
<dbReference type="InterPro" id="IPR017459">
    <property type="entry name" value="Glycosyl_Trfase_fam3_N_dom"/>
</dbReference>
<dbReference type="InterPro" id="IPR036320">
    <property type="entry name" value="Glycosyl_Trfase_fam3_N_dom_sf"/>
</dbReference>
<dbReference type="InterPro" id="IPR035902">
    <property type="entry name" value="Nuc_phospho_transferase"/>
</dbReference>
<dbReference type="NCBIfam" id="TIGR01245">
    <property type="entry name" value="trpD"/>
    <property type="match status" value="1"/>
</dbReference>
<dbReference type="PANTHER" id="PTHR43285">
    <property type="entry name" value="ANTHRANILATE PHOSPHORIBOSYLTRANSFERASE"/>
    <property type="match status" value="1"/>
</dbReference>
<dbReference type="PANTHER" id="PTHR43285:SF2">
    <property type="entry name" value="ANTHRANILATE PHOSPHORIBOSYLTRANSFERASE"/>
    <property type="match status" value="1"/>
</dbReference>
<dbReference type="Pfam" id="PF02885">
    <property type="entry name" value="Glycos_trans_3N"/>
    <property type="match status" value="1"/>
</dbReference>
<dbReference type="Pfam" id="PF00591">
    <property type="entry name" value="Glycos_transf_3"/>
    <property type="match status" value="1"/>
</dbReference>
<dbReference type="SUPFAM" id="SSF52418">
    <property type="entry name" value="Nucleoside phosphorylase/phosphoribosyltransferase catalytic domain"/>
    <property type="match status" value="1"/>
</dbReference>
<dbReference type="SUPFAM" id="SSF47648">
    <property type="entry name" value="Nucleoside phosphorylase/phosphoribosyltransferase N-terminal domain"/>
    <property type="match status" value="1"/>
</dbReference>
<evidence type="ECO:0000255" key="1">
    <source>
        <dbReference type="HAMAP-Rule" id="MF_00211"/>
    </source>
</evidence>
<keyword id="KW-0028">Amino-acid biosynthesis</keyword>
<keyword id="KW-0057">Aromatic amino acid biosynthesis</keyword>
<keyword id="KW-0328">Glycosyltransferase</keyword>
<keyword id="KW-0460">Magnesium</keyword>
<keyword id="KW-0479">Metal-binding</keyword>
<keyword id="KW-0808">Transferase</keyword>
<keyword id="KW-0822">Tryptophan biosynthesis</keyword>
<reference key="1">
    <citation type="journal article" date="2007" name="PLoS Genet.">
        <title>Patterns and implications of gene gain and loss in the evolution of Prochlorococcus.</title>
        <authorList>
            <person name="Kettler G.C."/>
            <person name="Martiny A.C."/>
            <person name="Huang K."/>
            <person name="Zucker J."/>
            <person name="Coleman M.L."/>
            <person name="Rodrigue S."/>
            <person name="Chen F."/>
            <person name="Lapidus A."/>
            <person name="Ferriera S."/>
            <person name="Johnson J."/>
            <person name="Steglich C."/>
            <person name="Church G.M."/>
            <person name="Richardson P."/>
            <person name="Chisholm S.W."/>
        </authorList>
    </citation>
    <scope>NUCLEOTIDE SEQUENCE [LARGE SCALE GENOMIC DNA]</scope>
    <source>
        <strain>AS9601</strain>
    </source>
</reference>
<sequence length="344" mass="37016">MSSNLSNSQILNNLLEGRNLDELTSRSLMQRWLNDEISDVETGAFLSALRAKSSTGVELSSMAEELLNVCKLPVARPNLYLVDTCGTGGDGANTFNISTAVAFVAASCGVKIAKHGNKSASGKVGSADVLLNLGLDLNCSLEKVITAVSEIGITFLFAPVWHKSLIKLAPLRKTLGIRTVFNQLGPLVNPLRPNAQVLGVASEDLLEPMGRALLKMGMNRAIVVYGSGGLDEASLQGENKLVLVENGELRFSKINISNFNHENIANEKLVVSDQESNEEILKSVLNGSGQISHINVVALNSALVLWAAGIEDDLNEGFNKALFSINQGDPWKKFLLLKNYLQTN</sequence>
<comment type="function">
    <text evidence="1">Catalyzes the transfer of the phosphoribosyl group of 5-phosphorylribose-1-pyrophosphate (PRPP) to anthranilate to yield N-(5'-phosphoribosyl)-anthranilate (PRA).</text>
</comment>
<comment type="catalytic activity">
    <reaction evidence="1">
        <text>N-(5-phospho-beta-D-ribosyl)anthranilate + diphosphate = 5-phospho-alpha-D-ribose 1-diphosphate + anthranilate</text>
        <dbReference type="Rhea" id="RHEA:11768"/>
        <dbReference type="ChEBI" id="CHEBI:16567"/>
        <dbReference type="ChEBI" id="CHEBI:18277"/>
        <dbReference type="ChEBI" id="CHEBI:33019"/>
        <dbReference type="ChEBI" id="CHEBI:58017"/>
        <dbReference type="EC" id="2.4.2.18"/>
    </reaction>
</comment>
<comment type="cofactor">
    <cofactor evidence="1">
        <name>Mg(2+)</name>
        <dbReference type="ChEBI" id="CHEBI:18420"/>
    </cofactor>
    <text evidence="1">Binds 2 magnesium ions per monomer.</text>
</comment>
<comment type="pathway">
    <text evidence="1">Amino-acid biosynthesis; L-tryptophan biosynthesis; L-tryptophan from chorismate: step 2/5.</text>
</comment>
<comment type="subunit">
    <text evidence="1">Homodimer.</text>
</comment>
<comment type="similarity">
    <text evidence="1">Belongs to the anthranilate phosphoribosyltransferase family.</text>
</comment>
<protein>
    <recommendedName>
        <fullName evidence="1">Anthranilate phosphoribosyltransferase</fullName>
        <ecNumber evidence="1">2.4.2.18</ecNumber>
    </recommendedName>
</protein>
<organism>
    <name type="scientific">Prochlorococcus marinus (strain AS9601)</name>
    <dbReference type="NCBI Taxonomy" id="146891"/>
    <lineage>
        <taxon>Bacteria</taxon>
        <taxon>Bacillati</taxon>
        <taxon>Cyanobacteriota</taxon>
        <taxon>Cyanophyceae</taxon>
        <taxon>Synechococcales</taxon>
        <taxon>Prochlorococcaceae</taxon>
        <taxon>Prochlorococcus</taxon>
    </lineage>
</organism>
<accession>A2BQY1</accession>
<proteinExistence type="inferred from homology"/>
<gene>
    <name evidence="1" type="primary">trpD</name>
    <name type="ordered locus">A9601_09081</name>
</gene>
<name>TRPD_PROMS</name>